<feature type="chain" id="PRO_0000315808" description="Long-chain-fatty-acid--CoA ligase ACSBG1">
    <location>
        <begin position="1"/>
        <end position="724"/>
    </location>
</feature>
<feature type="region of interest" description="Disordered" evidence="4">
    <location>
        <begin position="1"/>
        <end position="30"/>
    </location>
</feature>
<feature type="compositionally biased region" description="Basic and acidic residues" evidence="4">
    <location>
        <begin position="20"/>
        <end position="30"/>
    </location>
</feature>
<feature type="binding site" evidence="1">
    <location>
        <begin position="282"/>
        <end position="290"/>
    </location>
    <ligand>
        <name>ATP</name>
        <dbReference type="ChEBI" id="CHEBI:30616"/>
    </ligand>
</feature>
<feature type="binding site" evidence="1">
    <location>
        <begin position="472"/>
        <end position="477"/>
    </location>
    <ligand>
        <name>ATP</name>
        <dbReference type="ChEBI" id="CHEBI:30616"/>
    </ligand>
</feature>
<feature type="binding site" evidence="1">
    <location>
        <position position="550"/>
    </location>
    <ligand>
        <name>ATP</name>
        <dbReference type="ChEBI" id="CHEBI:30616"/>
    </ligand>
</feature>
<feature type="binding site" evidence="1">
    <location>
        <position position="565"/>
    </location>
    <ligand>
        <name>ATP</name>
        <dbReference type="ChEBI" id="CHEBI:30616"/>
    </ligand>
</feature>
<feature type="binding site" evidence="1">
    <location>
        <position position="701"/>
    </location>
    <ligand>
        <name>ATP</name>
        <dbReference type="ChEBI" id="CHEBI:30616"/>
    </ligand>
</feature>
<feature type="modified residue" description="Phosphoserine" evidence="2">
    <location>
        <position position="53"/>
    </location>
</feature>
<feature type="modified residue" description="Phosphoserine" evidence="3">
    <location>
        <position position="56"/>
    </location>
</feature>
<feature type="modified residue" description="Phosphotyrosine" evidence="3">
    <location>
        <position position="658"/>
    </location>
</feature>
<feature type="sequence variant" id="VAR_038314" description="In dbSNP:rs12899901.">
    <original>E</original>
    <variation>V</variation>
    <location>
        <position position="194"/>
    </location>
</feature>
<feature type="sequence variant" id="VAR_038315" description="In dbSNP:rs2304824." evidence="7 8 10 11">
    <original>M</original>
    <variation>V</variation>
    <location>
        <position position="633"/>
    </location>
</feature>
<feature type="sequence variant" id="VAR_038316" description="In dbSNP:rs11072735." evidence="7">
    <original>A</original>
    <variation>V</variation>
    <location>
        <position position="673"/>
    </location>
</feature>
<sequence length="724" mass="81290">MPRNSGAGYGCPHGDPSMLDSRETPQESRQDMIVRTTQEKLKTSSLTDRQPLSKESLNHALELSVPEKVNNAQWDAPEEALWTTRADGRVRLRIDPSCPQLPYTVHRMFYEALDKYGDLIALGFKRQDKWEHISYSQYYLLARRAAKGFLKLGLKQAHSVAILGFNSPEWFFSAVGTVFAGGIVTGIYTTSSPEACQYIAYDCCANVIMVDTQKQLEKILKIWKQLPHLKAVVIYKEPPPNKMANVYTMEEFMELGNEVPEEALDAIIDTQQPNQCCVLVYTSGTTGNPKGVMLSQDNITWTARYGSQAGDIRPAEVQQEVVVSYLPLSHIAAQIYDLWTGIQWGAQVCFAEPDALKGSLVNTLREVEPTSHMGVPRVWEKIMERIQEVAAQSGFIRRKMLLWAMSVTLEQNLTCPGSDLKPFTTRLADYLVLAKVRQALGFAKCQKNFYGAAPMMAETQHFFLGLNIRLYAGYGLSETSGPHFMSSPYNYRLYSSGKLVPGCRVKLVNQDAEGIGEICLWGRTIFMGYLNMEDKTCEAIDEEGWLHTGDAGRLDADGFLYITGRLKELIITAGGENVPPVPIEEAVKMELPIISNAMLIGDQRKFLSMLLTLKCTLDPDTSDQTDNLTEQAMEFCQRVGSRATTVSEIIEKKDEAVYQAIEEGIRRVNMNAAARPYHIQKWAILERDFSISGGELGPTMKLKRLTVLEKYKGIIDSFYQEQKM</sequence>
<keyword id="KW-0067">ATP-binding</keyword>
<keyword id="KW-1003">Cell membrane</keyword>
<keyword id="KW-0963">Cytoplasm</keyword>
<keyword id="KW-0968">Cytoplasmic vesicle</keyword>
<keyword id="KW-0256">Endoplasmic reticulum</keyword>
<keyword id="KW-0276">Fatty acid metabolism</keyword>
<keyword id="KW-0436">Ligase</keyword>
<keyword id="KW-0443">Lipid metabolism</keyword>
<keyword id="KW-0472">Membrane</keyword>
<keyword id="KW-0492">Microsome</keyword>
<keyword id="KW-0547">Nucleotide-binding</keyword>
<keyword id="KW-0597">Phosphoprotein</keyword>
<keyword id="KW-1267">Proteomics identification</keyword>
<keyword id="KW-1185">Reference proteome</keyword>
<dbReference type="EC" id="6.2.1.3" evidence="5 9"/>
<dbReference type="EMBL" id="AF179481">
    <property type="protein sequence ID" value="AAG09404.1"/>
    <property type="molecule type" value="mRNA"/>
</dbReference>
<dbReference type="EMBL" id="AB014531">
    <property type="protein sequence ID" value="BAA31606.2"/>
    <property type="status" value="ALT_INIT"/>
    <property type="molecule type" value="mRNA"/>
</dbReference>
<dbReference type="EMBL" id="AK314508">
    <property type="protein sequence ID" value="BAG37108.1"/>
    <property type="molecule type" value="mRNA"/>
</dbReference>
<dbReference type="EMBL" id="AC090260">
    <property type="status" value="NOT_ANNOTATED_CDS"/>
    <property type="molecule type" value="Genomic_DNA"/>
</dbReference>
<dbReference type="EMBL" id="AC090607">
    <property type="status" value="NOT_ANNOTATED_CDS"/>
    <property type="molecule type" value="Genomic_DNA"/>
</dbReference>
<dbReference type="EMBL" id="CH471136">
    <property type="protein sequence ID" value="EAW99180.1"/>
    <property type="molecule type" value="Genomic_DNA"/>
</dbReference>
<dbReference type="EMBL" id="BC009289">
    <property type="protein sequence ID" value="AAH09289.1"/>
    <property type="molecule type" value="mRNA"/>
</dbReference>
<dbReference type="CCDS" id="CCDS10298.1"/>
<dbReference type="RefSeq" id="NP_001186306.1">
    <property type="nucleotide sequence ID" value="NM_001199377.1"/>
</dbReference>
<dbReference type="RefSeq" id="NP_055977.3">
    <property type="nucleotide sequence ID" value="NM_015162.4"/>
</dbReference>
<dbReference type="SMR" id="Q96GR2"/>
<dbReference type="BioGRID" id="116813">
    <property type="interactions" value="9"/>
</dbReference>
<dbReference type="FunCoup" id="Q96GR2">
    <property type="interactions" value="277"/>
</dbReference>
<dbReference type="IntAct" id="Q96GR2">
    <property type="interactions" value="4"/>
</dbReference>
<dbReference type="MINT" id="Q96GR2"/>
<dbReference type="STRING" id="9606.ENSP00000258873"/>
<dbReference type="BindingDB" id="Q96GR2"/>
<dbReference type="DrugBank" id="DB08326">
    <property type="generic name" value="2-(6-HYDROXY-1,3-BENZOTHIAZOL-2-YL)-1,3-THIAZOL-4(5H)-ONE"/>
</dbReference>
<dbReference type="SwissLipids" id="SLP:000000450"/>
<dbReference type="iPTMnet" id="Q96GR2"/>
<dbReference type="PhosphoSitePlus" id="Q96GR2"/>
<dbReference type="BioMuta" id="ACSBG1"/>
<dbReference type="DMDM" id="296434385"/>
<dbReference type="MassIVE" id="Q96GR2"/>
<dbReference type="PaxDb" id="9606-ENSP00000258873"/>
<dbReference type="PeptideAtlas" id="Q96GR2"/>
<dbReference type="ProteomicsDB" id="76656"/>
<dbReference type="Antibodypedia" id="27568">
    <property type="antibodies" value="170 antibodies from 23 providers"/>
</dbReference>
<dbReference type="DNASU" id="23205"/>
<dbReference type="Ensembl" id="ENST00000258873.9">
    <property type="protein sequence ID" value="ENSP00000258873.4"/>
    <property type="gene ID" value="ENSG00000103740.10"/>
</dbReference>
<dbReference type="GeneID" id="23205"/>
<dbReference type="KEGG" id="hsa:23205"/>
<dbReference type="MANE-Select" id="ENST00000258873.9">
    <property type="protein sequence ID" value="ENSP00000258873.4"/>
    <property type="RefSeq nucleotide sequence ID" value="NM_015162.5"/>
    <property type="RefSeq protein sequence ID" value="NP_055977.3"/>
</dbReference>
<dbReference type="UCSC" id="uc002bdh.4">
    <property type="organism name" value="human"/>
</dbReference>
<dbReference type="AGR" id="HGNC:29567"/>
<dbReference type="CTD" id="23205"/>
<dbReference type="DisGeNET" id="23205"/>
<dbReference type="GeneCards" id="ACSBG1"/>
<dbReference type="HGNC" id="HGNC:29567">
    <property type="gene designation" value="ACSBG1"/>
</dbReference>
<dbReference type="HPA" id="ENSG00000103740">
    <property type="expression patterns" value="Group enriched (brain, skin)"/>
</dbReference>
<dbReference type="MIM" id="614362">
    <property type="type" value="gene"/>
</dbReference>
<dbReference type="neXtProt" id="NX_Q96GR2"/>
<dbReference type="OpenTargets" id="ENSG00000103740"/>
<dbReference type="PharmGKB" id="PA142672648"/>
<dbReference type="VEuPathDB" id="HostDB:ENSG00000103740"/>
<dbReference type="eggNOG" id="KOG1256">
    <property type="taxonomic scope" value="Eukaryota"/>
</dbReference>
<dbReference type="GeneTree" id="ENSGT00940000160380"/>
<dbReference type="InParanoid" id="Q96GR2"/>
<dbReference type="OMA" id="IGDHRKY"/>
<dbReference type="OrthoDB" id="3633556at2759"/>
<dbReference type="PAN-GO" id="Q96GR2">
    <property type="GO annotations" value="3 GO annotations based on evolutionary models"/>
</dbReference>
<dbReference type="PhylomeDB" id="Q96GR2"/>
<dbReference type="TreeFam" id="TF354286"/>
<dbReference type="BioCyc" id="MetaCyc:HS02532-MONOMER"/>
<dbReference type="PathwayCommons" id="Q96GR2"/>
<dbReference type="Reactome" id="R-HSA-75876">
    <property type="pathway name" value="Synthesis of very long-chain fatty acyl-CoAs"/>
</dbReference>
<dbReference type="SignaLink" id="Q96GR2"/>
<dbReference type="BioGRID-ORCS" id="23205">
    <property type="hits" value="12 hits in 1151 CRISPR screens"/>
</dbReference>
<dbReference type="ChiTaRS" id="ACSBG1">
    <property type="organism name" value="human"/>
</dbReference>
<dbReference type="GeneWiki" id="ACSBG1"/>
<dbReference type="GenomeRNAi" id="23205"/>
<dbReference type="Pharos" id="Q96GR2">
    <property type="development level" value="Tbio"/>
</dbReference>
<dbReference type="PRO" id="PR:Q96GR2"/>
<dbReference type="Proteomes" id="UP000005640">
    <property type="component" value="Chromosome 15"/>
</dbReference>
<dbReference type="RNAct" id="Q96GR2">
    <property type="molecule type" value="protein"/>
</dbReference>
<dbReference type="Bgee" id="ENSG00000103740">
    <property type="expression patterns" value="Expressed in upper leg skin and 130 other cell types or tissues"/>
</dbReference>
<dbReference type="ExpressionAtlas" id="Q96GR2">
    <property type="expression patterns" value="baseline and differential"/>
</dbReference>
<dbReference type="GO" id="GO:0005737">
    <property type="term" value="C:cytoplasm"/>
    <property type="evidence" value="ECO:0000314"/>
    <property type="project" value="HGNC-UCL"/>
</dbReference>
<dbReference type="GO" id="GO:0031410">
    <property type="term" value="C:cytoplasmic vesicle"/>
    <property type="evidence" value="ECO:0007669"/>
    <property type="project" value="UniProtKB-KW"/>
</dbReference>
<dbReference type="GO" id="GO:0005829">
    <property type="term" value="C:cytosol"/>
    <property type="evidence" value="ECO:0000304"/>
    <property type="project" value="Reactome"/>
</dbReference>
<dbReference type="GO" id="GO:0005783">
    <property type="term" value="C:endoplasmic reticulum"/>
    <property type="evidence" value="ECO:0000314"/>
    <property type="project" value="UniProtKB"/>
</dbReference>
<dbReference type="GO" id="GO:0005886">
    <property type="term" value="C:plasma membrane"/>
    <property type="evidence" value="ECO:0000314"/>
    <property type="project" value="UniProtKB"/>
</dbReference>
<dbReference type="GO" id="GO:0005524">
    <property type="term" value="F:ATP binding"/>
    <property type="evidence" value="ECO:0007669"/>
    <property type="project" value="UniProtKB-KW"/>
</dbReference>
<dbReference type="GO" id="GO:0004467">
    <property type="term" value="F:long-chain fatty acid-CoA ligase activity"/>
    <property type="evidence" value="ECO:0000314"/>
    <property type="project" value="UniProtKB"/>
</dbReference>
<dbReference type="GO" id="GO:0031957">
    <property type="term" value="F:very long-chain fatty acid-CoA ligase activity"/>
    <property type="evidence" value="ECO:0000314"/>
    <property type="project" value="HGNC-UCL"/>
</dbReference>
<dbReference type="GO" id="GO:0042759">
    <property type="term" value="P:long-chain fatty acid biosynthetic process"/>
    <property type="evidence" value="ECO:0000318"/>
    <property type="project" value="GO_Central"/>
</dbReference>
<dbReference type="GO" id="GO:0001676">
    <property type="term" value="P:long-chain fatty acid metabolic process"/>
    <property type="evidence" value="ECO:0000314"/>
    <property type="project" value="UniProtKB"/>
</dbReference>
<dbReference type="GO" id="GO:0035338">
    <property type="term" value="P:long-chain fatty-acyl-CoA biosynthetic process"/>
    <property type="evidence" value="ECO:0000304"/>
    <property type="project" value="Reactome"/>
</dbReference>
<dbReference type="GO" id="GO:0042552">
    <property type="term" value="P:myelination"/>
    <property type="evidence" value="ECO:0000303"/>
    <property type="project" value="HGNC-UCL"/>
</dbReference>
<dbReference type="GO" id="GO:0051384">
    <property type="term" value="P:response to glucocorticoid"/>
    <property type="evidence" value="ECO:0007669"/>
    <property type="project" value="Ensembl"/>
</dbReference>
<dbReference type="GO" id="GO:0000038">
    <property type="term" value="P:very long-chain fatty acid metabolic process"/>
    <property type="evidence" value="ECO:0000314"/>
    <property type="project" value="HGNC-UCL"/>
</dbReference>
<dbReference type="CDD" id="cd05933">
    <property type="entry name" value="ACSBG_like"/>
    <property type="match status" value="1"/>
</dbReference>
<dbReference type="FunFam" id="3.40.50.12780:FF:000021">
    <property type="entry name" value="Long-chain-fatty-acid--CoA ligase ACSBG1 isoform 1"/>
    <property type="match status" value="1"/>
</dbReference>
<dbReference type="FunFam" id="3.40.50.12780:FF:000023">
    <property type="entry name" value="Long-chain-fatty-acid--CoA ligase ACSBG1 isoform 1"/>
    <property type="match status" value="1"/>
</dbReference>
<dbReference type="Gene3D" id="3.40.50.12780">
    <property type="entry name" value="N-terminal domain of ligase-like"/>
    <property type="match status" value="2"/>
</dbReference>
<dbReference type="InterPro" id="IPR020845">
    <property type="entry name" value="AMP-binding_CS"/>
</dbReference>
<dbReference type="InterPro" id="IPR000873">
    <property type="entry name" value="AMP-dep_synth/lig_dom"/>
</dbReference>
<dbReference type="InterPro" id="IPR042099">
    <property type="entry name" value="ANL_N_sf"/>
</dbReference>
<dbReference type="PANTHER" id="PTHR43272:SF93">
    <property type="entry name" value="ACYL-COA SYNTHETASE BUBBLEGUM FAMILY MEMBER 1"/>
    <property type="match status" value="1"/>
</dbReference>
<dbReference type="PANTHER" id="PTHR43272">
    <property type="entry name" value="LONG-CHAIN-FATTY-ACID--COA LIGASE"/>
    <property type="match status" value="1"/>
</dbReference>
<dbReference type="Pfam" id="PF00501">
    <property type="entry name" value="AMP-binding"/>
    <property type="match status" value="1"/>
</dbReference>
<dbReference type="Pfam" id="PF23562">
    <property type="entry name" value="AMP-binding_C_3"/>
    <property type="match status" value="1"/>
</dbReference>
<dbReference type="SUPFAM" id="SSF56801">
    <property type="entry name" value="Acetyl-CoA synthetase-like"/>
    <property type="match status" value="1"/>
</dbReference>
<dbReference type="PROSITE" id="PS00455">
    <property type="entry name" value="AMP_BINDING"/>
    <property type="match status" value="1"/>
</dbReference>
<name>ACBG1_HUMAN</name>
<gene>
    <name evidence="13" type="primary">ACSBG1</name>
    <name type="synonym">BGM</name>
    <name type="synonym">KIAA0631</name>
    <name type="synonym">LPD</name>
</gene>
<organism>
    <name type="scientific">Homo sapiens</name>
    <name type="common">Human</name>
    <dbReference type="NCBI Taxonomy" id="9606"/>
    <lineage>
        <taxon>Eukaryota</taxon>
        <taxon>Metazoa</taxon>
        <taxon>Chordata</taxon>
        <taxon>Craniata</taxon>
        <taxon>Vertebrata</taxon>
        <taxon>Euteleostomi</taxon>
        <taxon>Mammalia</taxon>
        <taxon>Eutheria</taxon>
        <taxon>Euarchontoglires</taxon>
        <taxon>Primates</taxon>
        <taxon>Haplorrhini</taxon>
        <taxon>Catarrhini</taxon>
        <taxon>Hominidae</taxon>
        <taxon>Homo</taxon>
    </lineage>
</organism>
<proteinExistence type="evidence at protein level"/>
<evidence type="ECO:0000250" key="1"/>
<evidence type="ECO:0000250" key="2">
    <source>
        <dbReference type="UniProtKB" id="Q924N5"/>
    </source>
</evidence>
<evidence type="ECO:0000250" key="3">
    <source>
        <dbReference type="UniProtKB" id="Q99PU5"/>
    </source>
</evidence>
<evidence type="ECO:0000256" key="4">
    <source>
        <dbReference type="SAM" id="MobiDB-lite"/>
    </source>
</evidence>
<evidence type="ECO:0000269" key="5">
    <source>
    </source>
</evidence>
<evidence type="ECO:0000269" key="6">
    <source>
    </source>
</evidence>
<evidence type="ECO:0000269" key="7">
    <source>
    </source>
</evidence>
<evidence type="ECO:0000269" key="8">
    <source>
    </source>
</evidence>
<evidence type="ECO:0000269" key="9">
    <source>
    </source>
</evidence>
<evidence type="ECO:0000269" key="10">
    <source>
    </source>
</evidence>
<evidence type="ECO:0000269" key="11">
    <source ref="6"/>
</evidence>
<evidence type="ECO:0000305" key="12"/>
<evidence type="ECO:0000312" key="13">
    <source>
        <dbReference type="HGNC" id="HGNC:29567"/>
    </source>
</evidence>
<protein>
    <recommendedName>
        <fullName evidence="12">Long-chain-fatty-acid--CoA ligase ACSBG1</fullName>
        <ecNumber evidence="5 9">6.2.1.3</ecNumber>
    </recommendedName>
    <alternativeName>
        <fullName>Acyl-CoA synthetase bubblegum family member 1</fullName>
        <shortName>hBG1</shortName>
        <shortName>hsBG</shortName>
        <shortName>hsBGM</shortName>
    </alternativeName>
    <alternativeName>
        <fullName>Lipidosin</fullName>
    </alternativeName>
</protein>
<comment type="function">
    <text evidence="5 6 9">Catalyzes the conversion of fatty acids such as long-chain and very long-chain fatty acids to their active form acyl-CoAs for both synthesis of cellular lipids, and degradation via beta-oxidation (PubMed:10954726, PubMed:12975357, PubMed:24269233). Can activate diverse saturated, monosaturated and polyunsaturated fatty acids (PubMed:10954726).</text>
</comment>
<comment type="catalytic activity">
    <reaction evidence="5 9">
        <text>a long-chain fatty acid + ATP + CoA = a long-chain fatty acyl-CoA + AMP + diphosphate</text>
        <dbReference type="Rhea" id="RHEA:15421"/>
        <dbReference type="ChEBI" id="CHEBI:30616"/>
        <dbReference type="ChEBI" id="CHEBI:33019"/>
        <dbReference type="ChEBI" id="CHEBI:57287"/>
        <dbReference type="ChEBI" id="CHEBI:57560"/>
        <dbReference type="ChEBI" id="CHEBI:83139"/>
        <dbReference type="ChEBI" id="CHEBI:456215"/>
        <dbReference type="EC" id="6.2.1.3"/>
    </reaction>
</comment>
<comment type="catalytic activity">
    <reaction evidence="9">
        <text>(E)-hexadec-2-enoate + ATP + CoA = (2E)-hexadecenoyl-CoA + AMP + diphosphate</text>
        <dbReference type="Rhea" id="RHEA:36139"/>
        <dbReference type="ChEBI" id="CHEBI:30616"/>
        <dbReference type="ChEBI" id="CHEBI:33019"/>
        <dbReference type="ChEBI" id="CHEBI:57287"/>
        <dbReference type="ChEBI" id="CHEBI:61526"/>
        <dbReference type="ChEBI" id="CHEBI:72745"/>
        <dbReference type="ChEBI" id="CHEBI:456215"/>
    </reaction>
</comment>
<comment type="catalytic activity">
    <reaction evidence="9">
        <text>hexadecanoate + ATP + CoA = hexadecanoyl-CoA + AMP + diphosphate</text>
        <dbReference type="Rhea" id="RHEA:30751"/>
        <dbReference type="ChEBI" id="CHEBI:7896"/>
        <dbReference type="ChEBI" id="CHEBI:30616"/>
        <dbReference type="ChEBI" id="CHEBI:33019"/>
        <dbReference type="ChEBI" id="CHEBI:57287"/>
        <dbReference type="ChEBI" id="CHEBI:57379"/>
        <dbReference type="ChEBI" id="CHEBI:456215"/>
    </reaction>
</comment>
<comment type="subcellular location">
    <subcellularLocation>
        <location evidence="5">Cytoplasm</location>
    </subcellularLocation>
    <subcellularLocation>
        <location evidence="1">Cytoplasmic vesicle</location>
    </subcellularLocation>
    <subcellularLocation>
        <location evidence="1">Microsome</location>
    </subcellularLocation>
    <subcellularLocation>
        <location evidence="9">Endoplasmic reticulum</location>
    </subcellularLocation>
    <subcellularLocation>
        <location evidence="9">Cell membrane</location>
    </subcellularLocation>
</comment>
<comment type="tissue specificity">
    <text evidence="5 6 9">Expressed primarily in brain. Expressed at lower level in testis and adrenal gland. Present in all regions of brain except pituitary.</text>
</comment>
<comment type="similarity">
    <text evidence="12">Belongs to the ATP-dependent AMP-binding enzyme family. Bubblegum subfamily.</text>
</comment>
<comment type="sequence caution" evidence="12">
    <conflict type="erroneous initiation">
        <sequence resource="EMBL-CDS" id="BAA31606"/>
    </conflict>
    <text>Extended N-terminus.</text>
</comment>
<reference key="1">
    <citation type="journal article" date="2000" name="J. Biol. Chem.">
        <title>Very long-chain acyl-CoA synthetases. Human 'bubblegum' represents a new family of proteins capable of activating very long-chain fatty acids.</title>
        <authorList>
            <person name="Steinberg S.J."/>
            <person name="Morgenthaler J."/>
            <person name="Heinzer A.K."/>
            <person name="Smith K.D."/>
            <person name="Watkins P.A."/>
        </authorList>
    </citation>
    <scope>NUCLEOTIDE SEQUENCE [MRNA]</scope>
    <scope>ENZYME ACTIVITY</scope>
    <scope>FUNCTION</scope>
    <scope>SUBCELLULAR LOCATION</scope>
    <scope>TISSUE SPECIFICITY</scope>
    <source>
        <tissue>Brain</tissue>
    </source>
</reference>
<reference key="2">
    <citation type="journal article" date="1998" name="DNA Res.">
        <title>Prediction of the coding sequences of unidentified human genes. X. The complete sequences of 100 new cDNA clones from brain which can code for large proteins in vitro.</title>
        <authorList>
            <person name="Ishikawa K."/>
            <person name="Nagase T."/>
            <person name="Suyama M."/>
            <person name="Miyajima N."/>
            <person name="Tanaka A."/>
            <person name="Kotani H."/>
            <person name="Nomura N."/>
            <person name="Ohara O."/>
        </authorList>
    </citation>
    <scope>NUCLEOTIDE SEQUENCE [LARGE SCALE MRNA]</scope>
    <scope>VARIANT VAL-633</scope>
    <source>
        <tissue>Brain</tissue>
    </source>
</reference>
<reference key="3">
    <citation type="journal article" date="2002" name="DNA Res.">
        <title>Construction of expression-ready cDNA clones for KIAA genes: manual curation of 330 KIAA cDNA clones.</title>
        <authorList>
            <person name="Nakajima D."/>
            <person name="Okazaki N."/>
            <person name="Yamakawa H."/>
            <person name="Kikuno R."/>
            <person name="Ohara O."/>
            <person name="Nagase T."/>
        </authorList>
    </citation>
    <scope>SEQUENCE REVISION</scope>
</reference>
<reference key="4">
    <citation type="journal article" date="2004" name="Nat. Genet.">
        <title>Complete sequencing and characterization of 21,243 full-length human cDNAs.</title>
        <authorList>
            <person name="Ota T."/>
            <person name="Suzuki Y."/>
            <person name="Nishikawa T."/>
            <person name="Otsuki T."/>
            <person name="Sugiyama T."/>
            <person name="Irie R."/>
            <person name="Wakamatsu A."/>
            <person name="Hayashi K."/>
            <person name="Sato H."/>
            <person name="Nagai K."/>
            <person name="Kimura K."/>
            <person name="Makita H."/>
            <person name="Sekine M."/>
            <person name="Obayashi M."/>
            <person name="Nishi T."/>
            <person name="Shibahara T."/>
            <person name="Tanaka T."/>
            <person name="Ishii S."/>
            <person name="Yamamoto J."/>
            <person name="Saito K."/>
            <person name="Kawai Y."/>
            <person name="Isono Y."/>
            <person name="Nakamura Y."/>
            <person name="Nagahari K."/>
            <person name="Murakami K."/>
            <person name="Yasuda T."/>
            <person name="Iwayanagi T."/>
            <person name="Wagatsuma M."/>
            <person name="Shiratori A."/>
            <person name="Sudo H."/>
            <person name="Hosoiri T."/>
            <person name="Kaku Y."/>
            <person name="Kodaira H."/>
            <person name="Kondo H."/>
            <person name="Sugawara M."/>
            <person name="Takahashi M."/>
            <person name="Kanda K."/>
            <person name="Yokoi T."/>
            <person name="Furuya T."/>
            <person name="Kikkawa E."/>
            <person name="Omura Y."/>
            <person name="Abe K."/>
            <person name="Kamihara K."/>
            <person name="Katsuta N."/>
            <person name="Sato K."/>
            <person name="Tanikawa M."/>
            <person name="Yamazaki M."/>
            <person name="Ninomiya K."/>
            <person name="Ishibashi T."/>
            <person name="Yamashita H."/>
            <person name="Murakawa K."/>
            <person name="Fujimori K."/>
            <person name="Tanai H."/>
            <person name="Kimata M."/>
            <person name="Watanabe M."/>
            <person name="Hiraoka S."/>
            <person name="Chiba Y."/>
            <person name="Ishida S."/>
            <person name="Ono Y."/>
            <person name="Takiguchi S."/>
            <person name="Watanabe S."/>
            <person name="Yosida M."/>
            <person name="Hotuta T."/>
            <person name="Kusano J."/>
            <person name="Kanehori K."/>
            <person name="Takahashi-Fujii A."/>
            <person name="Hara H."/>
            <person name="Tanase T.-O."/>
            <person name="Nomura Y."/>
            <person name="Togiya S."/>
            <person name="Komai F."/>
            <person name="Hara R."/>
            <person name="Takeuchi K."/>
            <person name="Arita M."/>
            <person name="Imose N."/>
            <person name="Musashino K."/>
            <person name="Yuuki H."/>
            <person name="Oshima A."/>
            <person name="Sasaki N."/>
            <person name="Aotsuka S."/>
            <person name="Yoshikawa Y."/>
            <person name="Matsunawa H."/>
            <person name="Ichihara T."/>
            <person name="Shiohata N."/>
            <person name="Sano S."/>
            <person name="Moriya S."/>
            <person name="Momiyama H."/>
            <person name="Satoh N."/>
            <person name="Takami S."/>
            <person name="Terashima Y."/>
            <person name="Suzuki O."/>
            <person name="Nakagawa S."/>
            <person name="Senoh A."/>
            <person name="Mizoguchi H."/>
            <person name="Goto Y."/>
            <person name="Shimizu F."/>
            <person name="Wakebe H."/>
            <person name="Hishigaki H."/>
            <person name="Watanabe T."/>
            <person name="Sugiyama A."/>
            <person name="Takemoto M."/>
            <person name="Kawakami B."/>
            <person name="Yamazaki M."/>
            <person name="Watanabe K."/>
            <person name="Kumagai A."/>
            <person name="Itakura S."/>
            <person name="Fukuzumi Y."/>
            <person name="Fujimori Y."/>
            <person name="Komiyama M."/>
            <person name="Tashiro H."/>
            <person name="Tanigami A."/>
            <person name="Fujiwara T."/>
            <person name="Ono T."/>
            <person name="Yamada K."/>
            <person name="Fujii Y."/>
            <person name="Ozaki K."/>
            <person name="Hirao M."/>
            <person name="Ohmori Y."/>
            <person name="Kawabata A."/>
            <person name="Hikiji T."/>
            <person name="Kobatake N."/>
            <person name="Inagaki H."/>
            <person name="Ikema Y."/>
            <person name="Okamoto S."/>
            <person name="Okitani R."/>
            <person name="Kawakami T."/>
            <person name="Noguchi S."/>
            <person name="Itoh T."/>
            <person name="Shigeta K."/>
            <person name="Senba T."/>
            <person name="Matsumura K."/>
            <person name="Nakajima Y."/>
            <person name="Mizuno T."/>
            <person name="Morinaga M."/>
            <person name="Sasaki M."/>
            <person name="Togashi T."/>
            <person name="Oyama M."/>
            <person name="Hata H."/>
            <person name="Watanabe M."/>
            <person name="Komatsu T."/>
            <person name="Mizushima-Sugano J."/>
            <person name="Satoh T."/>
            <person name="Shirai Y."/>
            <person name="Takahashi Y."/>
            <person name="Nakagawa K."/>
            <person name="Okumura K."/>
            <person name="Nagase T."/>
            <person name="Nomura N."/>
            <person name="Kikuchi H."/>
            <person name="Masuho Y."/>
            <person name="Yamashita R."/>
            <person name="Nakai K."/>
            <person name="Yada T."/>
            <person name="Nakamura Y."/>
            <person name="Ohara O."/>
            <person name="Isogai T."/>
            <person name="Sugano S."/>
        </authorList>
    </citation>
    <scope>NUCLEOTIDE SEQUENCE [LARGE SCALE MRNA]</scope>
    <scope>VARIANTS VAL-633 AND VAL-673</scope>
    <source>
        <tissue>Testis</tissue>
    </source>
</reference>
<reference key="5">
    <citation type="journal article" date="2006" name="Nature">
        <title>Analysis of the DNA sequence and duplication history of human chromosome 15.</title>
        <authorList>
            <person name="Zody M.C."/>
            <person name="Garber M."/>
            <person name="Sharpe T."/>
            <person name="Young S.K."/>
            <person name="Rowen L."/>
            <person name="O'Neill K."/>
            <person name="Whittaker C.A."/>
            <person name="Kamal M."/>
            <person name="Chang J.L."/>
            <person name="Cuomo C.A."/>
            <person name="Dewar K."/>
            <person name="FitzGerald M.G."/>
            <person name="Kodira C.D."/>
            <person name="Madan A."/>
            <person name="Qin S."/>
            <person name="Yang X."/>
            <person name="Abbasi N."/>
            <person name="Abouelleil A."/>
            <person name="Arachchi H.M."/>
            <person name="Baradarani L."/>
            <person name="Birditt B."/>
            <person name="Bloom S."/>
            <person name="Bloom T."/>
            <person name="Borowsky M.L."/>
            <person name="Burke J."/>
            <person name="Butler J."/>
            <person name="Cook A."/>
            <person name="DeArellano K."/>
            <person name="DeCaprio D."/>
            <person name="Dorris L. III"/>
            <person name="Dors M."/>
            <person name="Eichler E.E."/>
            <person name="Engels R."/>
            <person name="Fahey J."/>
            <person name="Fleetwood P."/>
            <person name="Friedman C."/>
            <person name="Gearin G."/>
            <person name="Hall J.L."/>
            <person name="Hensley G."/>
            <person name="Johnson E."/>
            <person name="Jones C."/>
            <person name="Kamat A."/>
            <person name="Kaur A."/>
            <person name="Locke D.P."/>
            <person name="Madan A."/>
            <person name="Munson G."/>
            <person name="Jaffe D.B."/>
            <person name="Lui A."/>
            <person name="Macdonald P."/>
            <person name="Mauceli E."/>
            <person name="Naylor J.W."/>
            <person name="Nesbitt R."/>
            <person name="Nicol R."/>
            <person name="O'Leary S.B."/>
            <person name="Ratcliffe A."/>
            <person name="Rounsley S."/>
            <person name="She X."/>
            <person name="Sneddon K.M.B."/>
            <person name="Stewart S."/>
            <person name="Sougnez C."/>
            <person name="Stone S.M."/>
            <person name="Topham K."/>
            <person name="Vincent D."/>
            <person name="Wang S."/>
            <person name="Zimmer A.R."/>
            <person name="Birren B.W."/>
            <person name="Hood L."/>
            <person name="Lander E.S."/>
            <person name="Nusbaum C."/>
        </authorList>
    </citation>
    <scope>NUCLEOTIDE SEQUENCE [LARGE SCALE GENOMIC DNA]</scope>
</reference>
<reference key="6">
    <citation type="submission" date="2005-09" db="EMBL/GenBank/DDBJ databases">
        <authorList>
            <person name="Mural R.J."/>
            <person name="Istrail S."/>
            <person name="Sutton G.G."/>
            <person name="Florea L."/>
            <person name="Halpern A.L."/>
            <person name="Mobarry C.M."/>
            <person name="Lippert R."/>
            <person name="Walenz B."/>
            <person name="Shatkay H."/>
            <person name="Dew I."/>
            <person name="Miller J.R."/>
            <person name="Flanigan M.J."/>
            <person name="Edwards N.J."/>
            <person name="Bolanos R."/>
            <person name="Fasulo D."/>
            <person name="Halldorsson B.V."/>
            <person name="Hannenhalli S."/>
            <person name="Turner R."/>
            <person name="Yooseph S."/>
            <person name="Lu F."/>
            <person name="Nusskern D.R."/>
            <person name="Shue B.C."/>
            <person name="Zheng X.H."/>
            <person name="Zhong F."/>
            <person name="Delcher A.L."/>
            <person name="Huson D.H."/>
            <person name="Kravitz S.A."/>
            <person name="Mouchard L."/>
            <person name="Reinert K."/>
            <person name="Remington K.A."/>
            <person name="Clark A.G."/>
            <person name="Waterman M.S."/>
            <person name="Eichler E.E."/>
            <person name="Adams M.D."/>
            <person name="Hunkapiller M.W."/>
            <person name="Myers E.W."/>
            <person name="Venter J.C."/>
        </authorList>
    </citation>
    <scope>NUCLEOTIDE SEQUENCE [LARGE SCALE GENOMIC DNA]</scope>
    <scope>VARIANT VAL-633</scope>
</reference>
<reference key="7">
    <citation type="journal article" date="2004" name="Genome Res.">
        <title>The status, quality, and expansion of the NIH full-length cDNA project: the Mammalian Gene Collection (MGC).</title>
        <authorList>
            <consortium name="The MGC Project Team"/>
        </authorList>
    </citation>
    <scope>NUCLEOTIDE SEQUENCE [LARGE SCALE MRNA]</scope>
    <scope>VARIANT VAL-633</scope>
    <source>
        <tissue>Skin</tissue>
    </source>
</reference>
<reference key="8">
    <citation type="journal article" date="2003" name="J. Biol. Chem.">
        <title>The acyl-CoA synthetase 'bubblegum' (lipidosin): further characterization and role in neuronal fatty acid beta-oxidation.</title>
        <authorList>
            <person name="Pei Z."/>
            <person name="Oey N.A."/>
            <person name="Zuidervaart M.M."/>
            <person name="Jia Z."/>
            <person name="Li Y."/>
            <person name="Steinberg S.J."/>
            <person name="Smith K.D."/>
            <person name="Watkins P.A."/>
        </authorList>
    </citation>
    <scope>FUNCTION</scope>
    <scope>TISSUE SPECIFICITY</scope>
</reference>
<reference key="9">
    <citation type="journal article" date="2013" name="Biochem. Biophys. Res. Commun.">
        <title>Identification of acyl-CoA synthetases involved in the mammalian sphingosine 1-phosphate metabolic pathway.</title>
        <authorList>
            <person name="Ohkuni A."/>
            <person name="Ohno Y."/>
            <person name="Kihara A."/>
        </authorList>
    </citation>
    <scope>CATALYTIC ACTIVITY</scope>
    <scope>FUNCTION</scope>
    <scope>SUBCELLULAR LOCATION</scope>
    <scope>TISSUE SPECIFICITY</scope>
</reference>
<accession>Q96GR2</accession>
<accession>B2RB61</accession>
<accession>O75126</accession>
<accession>Q76N27</accession>
<accession>Q9HC26</accession>